<sequence length="47" mass="5520">MKKFRWVVLGIVVVVCLLLWAQVFNIMCDQDVQFFSGICAINKFIPW</sequence>
<proteinExistence type="inferred from homology"/>
<comment type="function">
    <text evidence="1">PhoP-regulated transcription is redox-sensitive, being activated when the periplasm becomes more reducing. MgrB acts between DsbA/DsbB and PhoP/PhoQ in this pathway. Represses PhoP/PhoQ signaling, possibly by binding to the periplasmic domain of PhoQ, altering its activity and that of downstream effector PhoP.</text>
</comment>
<comment type="subunit">
    <text evidence="1">May form homooligomers. Probably interacts with the periplasmic domain of PhoQ.</text>
</comment>
<comment type="subcellular location">
    <subcellularLocation>
        <location evidence="1">Cell inner membrane</location>
        <topology evidence="1">Single-pass membrane protein</topology>
    </subcellularLocation>
</comment>
<comment type="similarity">
    <text evidence="1">Belongs to the MgrB family.</text>
</comment>
<accession>A9MV69</accession>
<reference key="1">
    <citation type="submission" date="2007-11" db="EMBL/GenBank/DDBJ databases">
        <authorList>
            <consortium name="The Salmonella enterica serovar Paratyphi B Genome Sequencing Project"/>
            <person name="McClelland M."/>
            <person name="Sanderson E.K."/>
            <person name="Porwollik S."/>
            <person name="Spieth J."/>
            <person name="Clifton W.S."/>
            <person name="Fulton R."/>
            <person name="Cordes M."/>
            <person name="Wollam A."/>
            <person name="Shah N."/>
            <person name="Pepin K."/>
            <person name="Bhonagiri V."/>
            <person name="Nash W."/>
            <person name="Johnson M."/>
            <person name="Thiruvilangam P."/>
            <person name="Wilson R."/>
        </authorList>
    </citation>
    <scope>NUCLEOTIDE SEQUENCE [LARGE SCALE GENOMIC DNA]</scope>
    <source>
        <strain>ATCC BAA-1250 / SPB7</strain>
    </source>
</reference>
<organism>
    <name type="scientific">Salmonella paratyphi B (strain ATCC BAA-1250 / SPB7)</name>
    <dbReference type="NCBI Taxonomy" id="1016998"/>
    <lineage>
        <taxon>Bacteria</taxon>
        <taxon>Pseudomonadati</taxon>
        <taxon>Pseudomonadota</taxon>
        <taxon>Gammaproteobacteria</taxon>
        <taxon>Enterobacterales</taxon>
        <taxon>Enterobacteriaceae</taxon>
        <taxon>Salmonella</taxon>
    </lineage>
</organism>
<name>MGRB_SALPB</name>
<feature type="chain" id="PRO_0000330678" description="PhoP/PhoQ regulator MgrB">
    <location>
        <begin position="1"/>
        <end position="47"/>
    </location>
</feature>
<feature type="transmembrane region" description="Helical" evidence="1">
    <location>
        <begin position="6"/>
        <end position="26"/>
    </location>
</feature>
<protein>
    <recommendedName>
        <fullName evidence="1">PhoP/PhoQ regulator MgrB</fullName>
    </recommendedName>
</protein>
<keyword id="KW-0997">Cell inner membrane</keyword>
<keyword id="KW-1003">Cell membrane</keyword>
<keyword id="KW-0472">Membrane</keyword>
<keyword id="KW-0812">Transmembrane</keyword>
<keyword id="KW-1133">Transmembrane helix</keyword>
<gene>
    <name evidence="1" type="primary">mgrB</name>
    <name type="ordered locus">SPAB_01371</name>
</gene>
<dbReference type="EMBL" id="CP000886">
    <property type="protein sequence ID" value="ABX66779.1"/>
    <property type="molecule type" value="Genomic_DNA"/>
</dbReference>
<dbReference type="RefSeq" id="WP_000714547.1">
    <property type="nucleotide sequence ID" value="NC_010102.1"/>
</dbReference>
<dbReference type="GeneID" id="66756315"/>
<dbReference type="KEGG" id="spq:SPAB_01371"/>
<dbReference type="PATRIC" id="fig|1016998.12.peg.1292"/>
<dbReference type="HOGENOM" id="CLU_208030_1_0_6"/>
<dbReference type="BioCyc" id="SENT1016998:SPAB_RS05610-MONOMER"/>
<dbReference type="Proteomes" id="UP000008556">
    <property type="component" value="Chromosome"/>
</dbReference>
<dbReference type="GO" id="GO:0005886">
    <property type="term" value="C:plasma membrane"/>
    <property type="evidence" value="ECO:0007669"/>
    <property type="project" value="UniProtKB-SubCell"/>
</dbReference>
<dbReference type="GO" id="GO:0070298">
    <property type="term" value="P:negative regulation of phosphorelay signal transduction system"/>
    <property type="evidence" value="ECO:0007669"/>
    <property type="project" value="UniProtKB-UniRule"/>
</dbReference>
<dbReference type="HAMAP" id="MF_01596">
    <property type="entry name" value="MgrB"/>
    <property type="match status" value="1"/>
</dbReference>
<dbReference type="InterPro" id="IPR020907">
    <property type="entry name" value="MgrB"/>
</dbReference>
<dbReference type="NCBIfam" id="NF007635">
    <property type="entry name" value="PRK10299.1"/>
    <property type="match status" value="1"/>
</dbReference>
<dbReference type="Pfam" id="PF13998">
    <property type="entry name" value="MgrB"/>
    <property type="match status" value="1"/>
</dbReference>
<evidence type="ECO:0000255" key="1">
    <source>
        <dbReference type="HAMAP-Rule" id="MF_01596"/>
    </source>
</evidence>